<sequence>MARTNTRKAILAGGCFWGIQNLFRRQPGVISTRVGYTGGGTPNATYRNHGMHAEAVEIIYDPAITDYRTLLEFFFQIHDPTTRNRQGNDQGTSYRSAIFYLDDEQKKVALDTIAAVEASSLWPGKVVTEVSLAEDFWEAEPEHQDYLQHYPNGYTCHFVRPNWKLPRRAPADAKADS</sequence>
<protein>
    <recommendedName>
        <fullName evidence="1">Peptide methionine sulfoxide reductase MsrA</fullName>
        <shortName evidence="1">Protein-methionine-S-oxide reductase</shortName>
        <ecNumber evidence="1">1.8.4.11</ecNumber>
    </recommendedName>
    <alternativeName>
        <fullName evidence="1">Peptide-methionine (S)-S-oxide reductase</fullName>
        <shortName evidence="1">Peptide Met(O) reductase</shortName>
    </alternativeName>
</protein>
<organism>
    <name type="scientific">Mycobacterium leprae (strain TN)</name>
    <dbReference type="NCBI Taxonomy" id="272631"/>
    <lineage>
        <taxon>Bacteria</taxon>
        <taxon>Bacillati</taxon>
        <taxon>Actinomycetota</taxon>
        <taxon>Actinomycetes</taxon>
        <taxon>Mycobacteriales</taxon>
        <taxon>Mycobacteriaceae</taxon>
        <taxon>Mycobacterium</taxon>
    </lineage>
</organism>
<dbReference type="EC" id="1.8.4.11" evidence="1"/>
<dbReference type="EMBL" id="AL583926">
    <property type="protein sequence ID" value="CAC32179.1"/>
    <property type="molecule type" value="Genomic_DNA"/>
</dbReference>
<dbReference type="PIR" id="E87240">
    <property type="entry name" value="E87240"/>
</dbReference>
<dbReference type="RefSeq" id="NP_302691.1">
    <property type="nucleotide sequence ID" value="NC_002677.1"/>
</dbReference>
<dbReference type="RefSeq" id="WP_010909010.1">
    <property type="nucleotide sequence ID" value="NC_002677.1"/>
</dbReference>
<dbReference type="SMR" id="Q9CCZ3"/>
<dbReference type="STRING" id="272631.gene:17576513"/>
<dbReference type="KEGG" id="mle:ML2647"/>
<dbReference type="PATRIC" id="fig|272631.5.peg.5084"/>
<dbReference type="Leproma" id="ML2647"/>
<dbReference type="eggNOG" id="COG0225">
    <property type="taxonomic scope" value="Bacteria"/>
</dbReference>
<dbReference type="HOGENOM" id="CLU_031040_10_2_11"/>
<dbReference type="OrthoDB" id="4174719at2"/>
<dbReference type="Proteomes" id="UP000000806">
    <property type="component" value="Chromosome"/>
</dbReference>
<dbReference type="GO" id="GO:0033744">
    <property type="term" value="F:L-methionine:thioredoxin-disulfide S-oxidoreductase activity"/>
    <property type="evidence" value="ECO:0007669"/>
    <property type="project" value="RHEA"/>
</dbReference>
<dbReference type="GO" id="GO:0008113">
    <property type="term" value="F:peptide-methionine (S)-S-oxide reductase activity"/>
    <property type="evidence" value="ECO:0007669"/>
    <property type="project" value="UniProtKB-UniRule"/>
</dbReference>
<dbReference type="GO" id="GO:0036211">
    <property type="term" value="P:protein modification process"/>
    <property type="evidence" value="ECO:0007669"/>
    <property type="project" value="UniProtKB-UniRule"/>
</dbReference>
<dbReference type="FunFam" id="3.30.1060.10:FF:000005">
    <property type="entry name" value="Peptide methionine sulfoxide reductase MsrA"/>
    <property type="match status" value="1"/>
</dbReference>
<dbReference type="Gene3D" id="3.30.1060.10">
    <property type="entry name" value="Peptide methionine sulphoxide reductase MsrA"/>
    <property type="match status" value="1"/>
</dbReference>
<dbReference type="HAMAP" id="MF_01401">
    <property type="entry name" value="MsrA"/>
    <property type="match status" value="1"/>
</dbReference>
<dbReference type="InterPro" id="IPR002569">
    <property type="entry name" value="Met_Sox_Rdtase_MsrA_dom"/>
</dbReference>
<dbReference type="InterPro" id="IPR036509">
    <property type="entry name" value="Met_Sox_Rdtase_MsrA_sf"/>
</dbReference>
<dbReference type="NCBIfam" id="TIGR00401">
    <property type="entry name" value="msrA"/>
    <property type="match status" value="1"/>
</dbReference>
<dbReference type="PANTHER" id="PTHR43774">
    <property type="entry name" value="PEPTIDE METHIONINE SULFOXIDE REDUCTASE"/>
    <property type="match status" value="1"/>
</dbReference>
<dbReference type="PANTHER" id="PTHR43774:SF1">
    <property type="entry name" value="PEPTIDE METHIONINE SULFOXIDE REDUCTASE MSRA 2"/>
    <property type="match status" value="1"/>
</dbReference>
<dbReference type="Pfam" id="PF01625">
    <property type="entry name" value="PMSR"/>
    <property type="match status" value="1"/>
</dbReference>
<dbReference type="SUPFAM" id="SSF55068">
    <property type="entry name" value="Peptide methionine sulfoxide reductase"/>
    <property type="match status" value="1"/>
</dbReference>
<gene>
    <name evidence="1" type="primary">msrA</name>
    <name type="ordered locus">ML2647</name>
</gene>
<name>MSRA_MYCLE</name>
<keyword id="KW-0560">Oxidoreductase</keyword>
<keyword id="KW-1185">Reference proteome</keyword>
<comment type="function">
    <text evidence="1">Has an important function as a repair enzyme for proteins that have been inactivated by oxidation. Catalyzes the reversible oxidation-reduction of methionine sulfoxide in proteins to methionine.</text>
</comment>
<comment type="catalytic activity">
    <reaction evidence="1">
        <text>L-methionyl-[protein] + [thioredoxin]-disulfide + H2O = L-methionyl-(S)-S-oxide-[protein] + [thioredoxin]-dithiol</text>
        <dbReference type="Rhea" id="RHEA:14217"/>
        <dbReference type="Rhea" id="RHEA-COMP:10698"/>
        <dbReference type="Rhea" id="RHEA-COMP:10700"/>
        <dbReference type="Rhea" id="RHEA-COMP:12313"/>
        <dbReference type="Rhea" id="RHEA-COMP:12315"/>
        <dbReference type="ChEBI" id="CHEBI:15377"/>
        <dbReference type="ChEBI" id="CHEBI:16044"/>
        <dbReference type="ChEBI" id="CHEBI:29950"/>
        <dbReference type="ChEBI" id="CHEBI:44120"/>
        <dbReference type="ChEBI" id="CHEBI:50058"/>
        <dbReference type="EC" id="1.8.4.11"/>
    </reaction>
</comment>
<comment type="catalytic activity">
    <reaction evidence="1">
        <text>[thioredoxin]-disulfide + L-methionine + H2O = L-methionine (S)-S-oxide + [thioredoxin]-dithiol</text>
        <dbReference type="Rhea" id="RHEA:19993"/>
        <dbReference type="Rhea" id="RHEA-COMP:10698"/>
        <dbReference type="Rhea" id="RHEA-COMP:10700"/>
        <dbReference type="ChEBI" id="CHEBI:15377"/>
        <dbReference type="ChEBI" id="CHEBI:29950"/>
        <dbReference type="ChEBI" id="CHEBI:50058"/>
        <dbReference type="ChEBI" id="CHEBI:57844"/>
        <dbReference type="ChEBI" id="CHEBI:58772"/>
        <dbReference type="EC" id="1.8.4.11"/>
    </reaction>
</comment>
<comment type="similarity">
    <text evidence="1">Belongs to the MsrA Met sulfoxide reductase family.</text>
</comment>
<evidence type="ECO:0000255" key="1">
    <source>
        <dbReference type="HAMAP-Rule" id="MF_01401"/>
    </source>
</evidence>
<accession>Q9CCZ3</accession>
<proteinExistence type="inferred from homology"/>
<feature type="chain" id="PRO_0000138557" description="Peptide methionine sulfoxide reductase MsrA">
    <location>
        <begin position="1"/>
        <end position="177"/>
    </location>
</feature>
<feature type="active site" evidence="1">
    <location>
        <position position="15"/>
    </location>
</feature>
<reference key="1">
    <citation type="journal article" date="2001" name="Nature">
        <title>Massive gene decay in the leprosy bacillus.</title>
        <authorList>
            <person name="Cole S.T."/>
            <person name="Eiglmeier K."/>
            <person name="Parkhill J."/>
            <person name="James K.D."/>
            <person name="Thomson N.R."/>
            <person name="Wheeler P.R."/>
            <person name="Honore N."/>
            <person name="Garnier T."/>
            <person name="Churcher C.M."/>
            <person name="Harris D.E."/>
            <person name="Mungall K.L."/>
            <person name="Basham D."/>
            <person name="Brown D."/>
            <person name="Chillingworth T."/>
            <person name="Connor R."/>
            <person name="Davies R.M."/>
            <person name="Devlin K."/>
            <person name="Duthoy S."/>
            <person name="Feltwell T."/>
            <person name="Fraser A."/>
            <person name="Hamlin N."/>
            <person name="Holroyd S."/>
            <person name="Hornsby T."/>
            <person name="Jagels K."/>
            <person name="Lacroix C."/>
            <person name="Maclean J."/>
            <person name="Moule S."/>
            <person name="Murphy L.D."/>
            <person name="Oliver K."/>
            <person name="Quail M.A."/>
            <person name="Rajandream M.A."/>
            <person name="Rutherford K.M."/>
            <person name="Rutter S."/>
            <person name="Seeger K."/>
            <person name="Simon S."/>
            <person name="Simmonds M."/>
            <person name="Skelton J."/>
            <person name="Squares R."/>
            <person name="Squares S."/>
            <person name="Stevens K."/>
            <person name="Taylor K."/>
            <person name="Whitehead S."/>
            <person name="Woodward J.R."/>
            <person name="Barrell B.G."/>
        </authorList>
    </citation>
    <scope>NUCLEOTIDE SEQUENCE [LARGE SCALE GENOMIC DNA]</scope>
    <source>
        <strain>TN</strain>
    </source>
</reference>